<feature type="chain" id="PRO_1000165250" description="Riboflavin biosynthesis protein RibBA">
    <location>
        <begin position="1"/>
        <end position="399"/>
    </location>
</feature>
<feature type="region of interest" description="DHBP synthase">
    <location>
        <begin position="1"/>
        <end position="199"/>
    </location>
</feature>
<feature type="region of interest" description="GTP cyclohydrolase II">
    <location>
        <begin position="200"/>
        <end position="399"/>
    </location>
</feature>
<feature type="active site" description="Proton acceptor; for GTP cyclohydrolase activity" evidence="1">
    <location>
        <position position="327"/>
    </location>
</feature>
<feature type="active site" description="Nucleophile; for GTP cyclohydrolase activity" evidence="1">
    <location>
        <position position="329"/>
    </location>
</feature>
<feature type="binding site" evidence="1">
    <location>
        <begin position="26"/>
        <end position="27"/>
    </location>
    <ligand>
        <name>D-ribulose 5-phosphate</name>
        <dbReference type="ChEBI" id="CHEBI:58121"/>
    </ligand>
</feature>
<feature type="binding site" evidence="1">
    <location>
        <position position="27"/>
    </location>
    <ligand>
        <name>Mg(2+)</name>
        <dbReference type="ChEBI" id="CHEBI:18420"/>
        <label>1</label>
    </ligand>
</feature>
<feature type="binding site" evidence="1">
    <location>
        <position position="27"/>
    </location>
    <ligand>
        <name>Mg(2+)</name>
        <dbReference type="ChEBI" id="CHEBI:18420"/>
        <label>2</label>
    </ligand>
</feature>
<feature type="binding site" evidence="1">
    <location>
        <position position="31"/>
    </location>
    <ligand>
        <name>D-ribulose 5-phosphate</name>
        <dbReference type="ChEBI" id="CHEBI:58121"/>
    </ligand>
</feature>
<feature type="binding site" evidence="1">
    <location>
        <begin position="138"/>
        <end position="142"/>
    </location>
    <ligand>
        <name>D-ribulose 5-phosphate</name>
        <dbReference type="ChEBI" id="CHEBI:58121"/>
    </ligand>
</feature>
<feature type="binding site" evidence="1">
    <location>
        <position position="141"/>
    </location>
    <ligand>
        <name>Mg(2+)</name>
        <dbReference type="ChEBI" id="CHEBI:18420"/>
        <label>2</label>
    </ligand>
</feature>
<feature type="binding site" evidence="1">
    <location>
        <position position="162"/>
    </location>
    <ligand>
        <name>D-ribulose 5-phosphate</name>
        <dbReference type="ChEBI" id="CHEBI:58121"/>
    </ligand>
</feature>
<feature type="binding site" evidence="1">
    <location>
        <begin position="250"/>
        <end position="254"/>
    </location>
    <ligand>
        <name>GTP</name>
        <dbReference type="ChEBI" id="CHEBI:37565"/>
    </ligand>
</feature>
<feature type="binding site" evidence="1">
    <location>
        <position position="255"/>
    </location>
    <ligand>
        <name>Zn(2+)</name>
        <dbReference type="ChEBI" id="CHEBI:29105"/>
        <note>catalytic</note>
    </ligand>
</feature>
<feature type="binding site" evidence="1">
    <location>
        <position position="266"/>
    </location>
    <ligand>
        <name>Zn(2+)</name>
        <dbReference type="ChEBI" id="CHEBI:29105"/>
        <note>catalytic</note>
    </ligand>
</feature>
<feature type="binding site" evidence="1">
    <location>
        <position position="268"/>
    </location>
    <ligand>
        <name>Zn(2+)</name>
        <dbReference type="ChEBI" id="CHEBI:29105"/>
        <note>catalytic</note>
    </ligand>
</feature>
<feature type="binding site" evidence="1">
    <location>
        <position position="271"/>
    </location>
    <ligand>
        <name>GTP</name>
        <dbReference type="ChEBI" id="CHEBI:37565"/>
    </ligand>
</feature>
<feature type="binding site" evidence="1">
    <location>
        <begin position="293"/>
        <end position="295"/>
    </location>
    <ligand>
        <name>GTP</name>
        <dbReference type="ChEBI" id="CHEBI:37565"/>
    </ligand>
</feature>
<feature type="binding site" evidence="1">
    <location>
        <position position="315"/>
    </location>
    <ligand>
        <name>GTP</name>
        <dbReference type="ChEBI" id="CHEBI:37565"/>
    </ligand>
</feature>
<feature type="binding site" evidence="1">
    <location>
        <position position="350"/>
    </location>
    <ligand>
        <name>GTP</name>
        <dbReference type="ChEBI" id="CHEBI:37565"/>
    </ligand>
</feature>
<feature type="binding site" evidence="1">
    <location>
        <position position="355"/>
    </location>
    <ligand>
        <name>GTP</name>
        <dbReference type="ChEBI" id="CHEBI:37565"/>
    </ligand>
</feature>
<feature type="site" description="Essential for DHBP synthase activity" evidence="1">
    <location>
        <position position="124"/>
    </location>
</feature>
<feature type="site" description="Essential for DHBP synthase activity" evidence="1">
    <location>
        <position position="162"/>
    </location>
</feature>
<dbReference type="EC" id="4.1.99.12" evidence="1"/>
<dbReference type="EC" id="3.5.4.25" evidence="1"/>
<dbReference type="EMBL" id="AP008955">
    <property type="protein sequence ID" value="BAH45789.1"/>
    <property type="molecule type" value="Genomic_DNA"/>
</dbReference>
<dbReference type="RefSeq" id="WP_015893049.1">
    <property type="nucleotide sequence ID" value="NC_012491.1"/>
</dbReference>
<dbReference type="SMR" id="C0ZKW2"/>
<dbReference type="STRING" id="358681.BBR47_48120"/>
<dbReference type="KEGG" id="bbe:BBR47_48120"/>
<dbReference type="eggNOG" id="COG0108">
    <property type="taxonomic scope" value="Bacteria"/>
</dbReference>
<dbReference type="eggNOG" id="COG0807">
    <property type="taxonomic scope" value="Bacteria"/>
</dbReference>
<dbReference type="HOGENOM" id="CLU_020273_1_2_9"/>
<dbReference type="UniPathway" id="UPA00275">
    <property type="reaction ID" value="UER00399"/>
</dbReference>
<dbReference type="UniPathway" id="UPA00275">
    <property type="reaction ID" value="UER00400"/>
</dbReference>
<dbReference type="Proteomes" id="UP000001877">
    <property type="component" value="Chromosome"/>
</dbReference>
<dbReference type="GO" id="GO:0005829">
    <property type="term" value="C:cytosol"/>
    <property type="evidence" value="ECO:0007669"/>
    <property type="project" value="TreeGrafter"/>
</dbReference>
<dbReference type="GO" id="GO:0008686">
    <property type="term" value="F:3,4-dihydroxy-2-butanone-4-phosphate synthase activity"/>
    <property type="evidence" value="ECO:0007669"/>
    <property type="project" value="UniProtKB-UniRule"/>
</dbReference>
<dbReference type="GO" id="GO:0005525">
    <property type="term" value="F:GTP binding"/>
    <property type="evidence" value="ECO:0007669"/>
    <property type="project" value="UniProtKB-KW"/>
</dbReference>
<dbReference type="GO" id="GO:0003935">
    <property type="term" value="F:GTP cyclohydrolase II activity"/>
    <property type="evidence" value="ECO:0007669"/>
    <property type="project" value="UniProtKB-UniRule"/>
</dbReference>
<dbReference type="GO" id="GO:0000287">
    <property type="term" value="F:magnesium ion binding"/>
    <property type="evidence" value="ECO:0007669"/>
    <property type="project" value="UniProtKB-UniRule"/>
</dbReference>
<dbReference type="GO" id="GO:0030145">
    <property type="term" value="F:manganese ion binding"/>
    <property type="evidence" value="ECO:0007669"/>
    <property type="project" value="UniProtKB-UniRule"/>
</dbReference>
<dbReference type="GO" id="GO:0008270">
    <property type="term" value="F:zinc ion binding"/>
    <property type="evidence" value="ECO:0007669"/>
    <property type="project" value="UniProtKB-UniRule"/>
</dbReference>
<dbReference type="GO" id="GO:0009231">
    <property type="term" value="P:riboflavin biosynthetic process"/>
    <property type="evidence" value="ECO:0007669"/>
    <property type="project" value="UniProtKB-UniRule"/>
</dbReference>
<dbReference type="CDD" id="cd00641">
    <property type="entry name" value="GTP_cyclohydro2"/>
    <property type="match status" value="1"/>
</dbReference>
<dbReference type="FunFam" id="3.40.50.10990:FF:000001">
    <property type="entry name" value="Riboflavin biosynthesis protein RibBA"/>
    <property type="match status" value="1"/>
</dbReference>
<dbReference type="FunFam" id="3.90.870.10:FF:000001">
    <property type="entry name" value="Riboflavin biosynthesis protein RibBA"/>
    <property type="match status" value="1"/>
</dbReference>
<dbReference type="Gene3D" id="3.90.870.10">
    <property type="entry name" value="DHBP synthase"/>
    <property type="match status" value="1"/>
</dbReference>
<dbReference type="Gene3D" id="3.40.50.10990">
    <property type="entry name" value="GTP cyclohydrolase II"/>
    <property type="match status" value="1"/>
</dbReference>
<dbReference type="HAMAP" id="MF_00179">
    <property type="entry name" value="RibA"/>
    <property type="match status" value="1"/>
</dbReference>
<dbReference type="HAMAP" id="MF_00180">
    <property type="entry name" value="RibB"/>
    <property type="match status" value="1"/>
</dbReference>
<dbReference type="HAMAP" id="MF_01283">
    <property type="entry name" value="RibBA"/>
    <property type="match status" value="1"/>
</dbReference>
<dbReference type="InterPro" id="IPR017945">
    <property type="entry name" value="DHBP_synth_RibB-like_a/b_dom"/>
</dbReference>
<dbReference type="InterPro" id="IPR000422">
    <property type="entry name" value="DHBP_synthase_RibB"/>
</dbReference>
<dbReference type="InterPro" id="IPR032677">
    <property type="entry name" value="GTP_cyclohydro_II"/>
</dbReference>
<dbReference type="InterPro" id="IPR000926">
    <property type="entry name" value="RibA"/>
</dbReference>
<dbReference type="InterPro" id="IPR036144">
    <property type="entry name" value="RibA-like_sf"/>
</dbReference>
<dbReference type="InterPro" id="IPR016299">
    <property type="entry name" value="Riboflavin_synth_RibBA"/>
</dbReference>
<dbReference type="NCBIfam" id="NF001591">
    <property type="entry name" value="PRK00393.1"/>
    <property type="match status" value="1"/>
</dbReference>
<dbReference type="NCBIfam" id="NF006803">
    <property type="entry name" value="PRK09311.1"/>
    <property type="match status" value="1"/>
</dbReference>
<dbReference type="NCBIfam" id="TIGR00505">
    <property type="entry name" value="ribA"/>
    <property type="match status" value="1"/>
</dbReference>
<dbReference type="NCBIfam" id="TIGR00506">
    <property type="entry name" value="ribB"/>
    <property type="match status" value="1"/>
</dbReference>
<dbReference type="PANTHER" id="PTHR21327:SF18">
    <property type="entry name" value="3,4-DIHYDROXY-2-BUTANONE 4-PHOSPHATE SYNTHASE"/>
    <property type="match status" value="1"/>
</dbReference>
<dbReference type="PANTHER" id="PTHR21327">
    <property type="entry name" value="GTP CYCLOHYDROLASE II-RELATED"/>
    <property type="match status" value="1"/>
</dbReference>
<dbReference type="Pfam" id="PF00926">
    <property type="entry name" value="DHBP_synthase"/>
    <property type="match status" value="1"/>
</dbReference>
<dbReference type="Pfam" id="PF00925">
    <property type="entry name" value="GTP_cyclohydro2"/>
    <property type="match status" value="1"/>
</dbReference>
<dbReference type="PIRSF" id="PIRSF001259">
    <property type="entry name" value="RibA"/>
    <property type="match status" value="1"/>
</dbReference>
<dbReference type="SUPFAM" id="SSF142695">
    <property type="entry name" value="RibA-like"/>
    <property type="match status" value="1"/>
</dbReference>
<dbReference type="SUPFAM" id="SSF55821">
    <property type="entry name" value="YrdC/RibB"/>
    <property type="match status" value="1"/>
</dbReference>
<protein>
    <recommendedName>
        <fullName evidence="1">Riboflavin biosynthesis protein RibBA</fullName>
    </recommendedName>
    <domain>
        <recommendedName>
            <fullName evidence="1">3,4-dihydroxy-2-butanone 4-phosphate synthase</fullName>
            <shortName evidence="1">DHBP synthase</shortName>
            <ecNumber evidence="1">4.1.99.12</ecNumber>
        </recommendedName>
    </domain>
    <domain>
        <recommendedName>
            <fullName evidence="1">GTP cyclohydrolase-2</fullName>
            <ecNumber evidence="1">3.5.4.25</ecNumber>
        </recommendedName>
        <alternativeName>
            <fullName evidence="1">GTP cyclohydrolase II</fullName>
        </alternativeName>
    </domain>
</protein>
<comment type="function">
    <text evidence="1">Catalyzes the conversion of D-ribulose 5-phosphate to formate and 3,4-dihydroxy-2-butanone 4-phosphate.</text>
</comment>
<comment type="function">
    <text evidence="1">Catalyzes the conversion of GTP to 2,5-diamino-6-ribosylamino-4(3H)-pyrimidinone 5'-phosphate (DARP), formate and pyrophosphate.</text>
</comment>
<comment type="catalytic activity">
    <reaction evidence="1">
        <text>D-ribulose 5-phosphate = (2S)-2-hydroxy-3-oxobutyl phosphate + formate + H(+)</text>
        <dbReference type="Rhea" id="RHEA:18457"/>
        <dbReference type="ChEBI" id="CHEBI:15378"/>
        <dbReference type="ChEBI" id="CHEBI:15740"/>
        <dbReference type="ChEBI" id="CHEBI:58121"/>
        <dbReference type="ChEBI" id="CHEBI:58830"/>
        <dbReference type="EC" id="4.1.99.12"/>
    </reaction>
</comment>
<comment type="catalytic activity">
    <reaction evidence="1">
        <text>GTP + 4 H2O = 2,5-diamino-6-hydroxy-4-(5-phosphoribosylamino)-pyrimidine + formate + 2 phosphate + 3 H(+)</text>
        <dbReference type="Rhea" id="RHEA:23704"/>
        <dbReference type="ChEBI" id="CHEBI:15377"/>
        <dbReference type="ChEBI" id="CHEBI:15378"/>
        <dbReference type="ChEBI" id="CHEBI:15740"/>
        <dbReference type="ChEBI" id="CHEBI:37565"/>
        <dbReference type="ChEBI" id="CHEBI:43474"/>
        <dbReference type="ChEBI" id="CHEBI:58614"/>
        <dbReference type="EC" id="3.5.4.25"/>
    </reaction>
</comment>
<comment type="cofactor">
    <cofactor evidence="1">
        <name>Mg(2+)</name>
        <dbReference type="ChEBI" id="CHEBI:18420"/>
    </cofactor>
    <cofactor evidence="1">
        <name>Mn(2+)</name>
        <dbReference type="ChEBI" id="CHEBI:29035"/>
    </cofactor>
    <text evidence="1">Binds 2 divalent metal cations per subunit. Magnesium or manganese.</text>
</comment>
<comment type="cofactor">
    <cofactor evidence="1">
        <name>Zn(2+)</name>
        <dbReference type="ChEBI" id="CHEBI:29105"/>
    </cofactor>
    <text evidence="1">Binds 1 zinc ion per subunit.</text>
</comment>
<comment type="pathway">
    <text evidence="1">Cofactor biosynthesis; riboflavin biosynthesis; 2-hydroxy-3-oxobutyl phosphate from D-ribulose 5-phosphate: step 1/1.</text>
</comment>
<comment type="pathway">
    <text evidence="1">Cofactor biosynthesis; riboflavin biosynthesis; 5-amino-6-(D-ribitylamino)uracil from GTP: step 1/4.</text>
</comment>
<comment type="similarity">
    <text evidence="1">In the N-terminal section; belongs to the DHBP synthase family.</text>
</comment>
<comment type="similarity">
    <text evidence="1">In the C-terminal section; belongs to the GTP cyclohydrolase II family.</text>
</comment>
<organism>
    <name type="scientific">Brevibacillus brevis (strain 47 / JCM 6285 / NBRC 100599)</name>
    <dbReference type="NCBI Taxonomy" id="358681"/>
    <lineage>
        <taxon>Bacteria</taxon>
        <taxon>Bacillati</taxon>
        <taxon>Bacillota</taxon>
        <taxon>Bacilli</taxon>
        <taxon>Bacillales</taxon>
        <taxon>Paenibacillaceae</taxon>
        <taxon>Brevibacillus</taxon>
    </lineage>
</organism>
<sequence>MFHSIEEALEDLRQGKAVIVVDDEDRENEGDFVCMAEAATPEMINFMVTHGRGLVCVPVTEEHATRLQLAPMVNANTDKQGTAFTVSIDEGSTNTGISAHERSQTVLAMLDEQKDADDFRRPGHIFPLIAKAGGVLRRAGHTEAAVDLARLAGGIPAGVICEIMNEDGSMARLPQLVEIARRFDLKLITIADLIAYRMRTESMVKKEIEVQLPTAYGDFRIAAYTNELDGKEHVALIKGEIGPDEPILVRVHSECLTGDIFGSYRCDCGPQLHAALEQIEANGRGILLYMRQEGRGIGLINKLRAYKLQEEGLDTVEANEKLGFAADLRDYGIGAQILRDLGVQRMRLLTNNPRKIRGLTGYGLAVEERVPLQTPEHLHNKQYLSTKQEKLGHLLHLNG</sequence>
<keyword id="KW-0342">GTP-binding</keyword>
<keyword id="KW-0378">Hydrolase</keyword>
<keyword id="KW-0456">Lyase</keyword>
<keyword id="KW-0460">Magnesium</keyword>
<keyword id="KW-0464">Manganese</keyword>
<keyword id="KW-0479">Metal-binding</keyword>
<keyword id="KW-0511">Multifunctional enzyme</keyword>
<keyword id="KW-0547">Nucleotide-binding</keyword>
<keyword id="KW-1185">Reference proteome</keyword>
<keyword id="KW-0686">Riboflavin biosynthesis</keyword>
<keyword id="KW-0862">Zinc</keyword>
<evidence type="ECO:0000255" key="1">
    <source>
        <dbReference type="HAMAP-Rule" id="MF_01283"/>
    </source>
</evidence>
<gene>
    <name evidence="1" type="primary">ribBA</name>
    <name type="ordered locus">BBR47_48120</name>
</gene>
<reference key="1">
    <citation type="submission" date="2005-03" db="EMBL/GenBank/DDBJ databases">
        <title>Brevibacillus brevis strain 47, complete genome.</title>
        <authorList>
            <person name="Hosoyama A."/>
            <person name="Yamada R."/>
            <person name="Hongo Y."/>
            <person name="Terui Y."/>
            <person name="Ankai A."/>
            <person name="Masuyama W."/>
            <person name="Sekiguchi M."/>
            <person name="Takeda T."/>
            <person name="Asano K."/>
            <person name="Ohji S."/>
            <person name="Ichikawa N."/>
            <person name="Narita S."/>
            <person name="Aoki N."/>
            <person name="Miura H."/>
            <person name="Matsushita S."/>
            <person name="Sekigawa T."/>
            <person name="Yamagata H."/>
            <person name="Yoshikawa H."/>
            <person name="Udaka S."/>
            <person name="Tanikawa S."/>
            <person name="Fujita N."/>
        </authorList>
    </citation>
    <scope>NUCLEOTIDE SEQUENCE [LARGE SCALE GENOMIC DNA]</scope>
    <source>
        <strain>47 / JCM 6285 / NBRC 100599</strain>
    </source>
</reference>
<accession>C0ZKW2</accession>
<proteinExistence type="inferred from homology"/>
<name>RIBBA_BREBN</name>